<reference key="1">
    <citation type="journal article" date="1998" name="Nature">
        <title>The genome sequence of Rickettsia prowazekii and the origin of mitochondria.</title>
        <authorList>
            <person name="Andersson S.G.E."/>
            <person name="Zomorodipour A."/>
            <person name="Andersson J.O."/>
            <person name="Sicheritz-Ponten T."/>
            <person name="Alsmark U.C.M."/>
            <person name="Podowski R.M."/>
            <person name="Naeslund A.K."/>
            <person name="Eriksson A.-S."/>
            <person name="Winkler H.H."/>
            <person name="Kurland C.G."/>
        </authorList>
    </citation>
    <scope>NUCLEOTIDE SEQUENCE [LARGE SCALE GENOMIC DNA]</scope>
    <source>
        <strain>Madrid E</strain>
    </source>
</reference>
<evidence type="ECO:0000255" key="1">
    <source>
        <dbReference type="HAMAP-Rule" id="MF_00203"/>
    </source>
</evidence>
<protein>
    <recommendedName>
        <fullName evidence="1">UvrABC system protein C</fullName>
        <shortName evidence="1">Protein UvrC</shortName>
    </recommendedName>
    <alternativeName>
        <fullName evidence="1">Excinuclease ABC subunit C</fullName>
    </alternativeName>
</protein>
<sequence length="626" mass="71787">MSLEISGSKLIKAQIIDAPECSGVYKMLDVNKQVIYIGKAKILKKRLTNYIKSDLDNKTLRMISNTYFLEYIITNSEVEALLLEAQLIKKFQPKFNILLKDDKSFPFIKLSLDHDFPQLIKYRGKALSDGKFFGPFASNTQVNTTLTELQKIFKLRSCTDNYFNSRTRPCLQYEIKRCYAPCVGKINKEDYRELVMQVKDFLQCRTIALQANLSKKMQELSSQMRFEEAAEIRDRIKALSYVQLKSGILDVVRDADIIAIVHKNLHYCIEVSLYRAGQPYGAIPYFFSSTENSTHEEVLEYFLLQFYQKQQVPSEIIMNHEINSKENMIEAIKKINNISDLSITVPHKGGKAKLVQKAEVNALLSLEQYLKKSIKNTDIMFALKKLFDLPEIPERIEIYDNSHLQGMFAVGVMVVAGQIGFDKKEYRVFSLSSRSLTIGSEIELRDDRKGDDYGMLRQVLTRRFTRLKNEPHKLPSLMIIDGGKGHLTIVKEVMDKFEINIPFVCMSKGRDRNAGLEQLHMQGKEVLTLDKNLPIMKYLQILRDEAHNFAIKNHRLGRSRAIKISSLDEIDGIGETRKTALLHYFGSYKAVCNATIDELTKVKGISKSLASMIFNILNRKISLDNS</sequence>
<keyword id="KW-0963">Cytoplasm</keyword>
<keyword id="KW-0227">DNA damage</keyword>
<keyword id="KW-0228">DNA excision</keyword>
<keyword id="KW-0234">DNA repair</keyword>
<keyword id="KW-0267">Excision nuclease</keyword>
<keyword id="KW-1185">Reference proteome</keyword>
<keyword id="KW-0742">SOS response</keyword>
<comment type="function">
    <text evidence="1">The UvrABC repair system catalyzes the recognition and processing of DNA lesions. UvrC both incises the 5' and 3' sides of the lesion. The N-terminal half is responsible for the 3' incision and the C-terminal half is responsible for the 5' incision.</text>
</comment>
<comment type="subunit">
    <text evidence="1">Interacts with UvrB in an incision complex.</text>
</comment>
<comment type="subcellular location">
    <subcellularLocation>
        <location evidence="1">Cytoplasm</location>
    </subcellularLocation>
</comment>
<comment type="similarity">
    <text evidence="1">Belongs to the UvrC family.</text>
</comment>
<feature type="chain" id="PRO_0000138332" description="UvrABC system protein C">
    <location>
        <begin position="1"/>
        <end position="626"/>
    </location>
</feature>
<feature type="domain" description="GIY-YIG" evidence="1">
    <location>
        <begin position="20"/>
        <end position="97"/>
    </location>
</feature>
<feature type="domain" description="UVR" evidence="1">
    <location>
        <begin position="207"/>
        <end position="242"/>
    </location>
</feature>
<name>UVRC_RICPR</name>
<dbReference type="EMBL" id="AJ235272">
    <property type="protein sequence ID" value="CAA15020.1"/>
    <property type="molecule type" value="Genomic_DNA"/>
</dbReference>
<dbReference type="PIR" id="B71662">
    <property type="entry name" value="B71662"/>
</dbReference>
<dbReference type="RefSeq" id="NP_220944.1">
    <property type="nucleotide sequence ID" value="NC_000963.1"/>
</dbReference>
<dbReference type="RefSeq" id="WP_004597883.1">
    <property type="nucleotide sequence ID" value="NC_000963.1"/>
</dbReference>
<dbReference type="SMR" id="Q9ZCX9"/>
<dbReference type="STRING" id="272947.gene:17555652"/>
<dbReference type="EnsemblBacteria" id="CAA15020">
    <property type="protein sequence ID" value="CAA15020"/>
    <property type="gene ID" value="CAA15020"/>
</dbReference>
<dbReference type="GeneID" id="57569697"/>
<dbReference type="KEGG" id="rpr:RP572"/>
<dbReference type="PATRIC" id="fig|272947.5.peg.589"/>
<dbReference type="eggNOG" id="COG0322">
    <property type="taxonomic scope" value="Bacteria"/>
</dbReference>
<dbReference type="HOGENOM" id="CLU_014841_3_2_5"/>
<dbReference type="OrthoDB" id="9804933at2"/>
<dbReference type="Proteomes" id="UP000002480">
    <property type="component" value="Chromosome"/>
</dbReference>
<dbReference type="GO" id="GO:0005737">
    <property type="term" value="C:cytoplasm"/>
    <property type="evidence" value="ECO:0007669"/>
    <property type="project" value="UniProtKB-SubCell"/>
</dbReference>
<dbReference type="GO" id="GO:0009380">
    <property type="term" value="C:excinuclease repair complex"/>
    <property type="evidence" value="ECO:0007669"/>
    <property type="project" value="InterPro"/>
</dbReference>
<dbReference type="GO" id="GO:0003677">
    <property type="term" value="F:DNA binding"/>
    <property type="evidence" value="ECO:0007669"/>
    <property type="project" value="UniProtKB-UniRule"/>
</dbReference>
<dbReference type="GO" id="GO:0009381">
    <property type="term" value="F:excinuclease ABC activity"/>
    <property type="evidence" value="ECO:0007669"/>
    <property type="project" value="UniProtKB-UniRule"/>
</dbReference>
<dbReference type="GO" id="GO:0006289">
    <property type="term" value="P:nucleotide-excision repair"/>
    <property type="evidence" value="ECO:0007669"/>
    <property type="project" value="UniProtKB-UniRule"/>
</dbReference>
<dbReference type="GO" id="GO:0009432">
    <property type="term" value="P:SOS response"/>
    <property type="evidence" value="ECO:0007669"/>
    <property type="project" value="UniProtKB-UniRule"/>
</dbReference>
<dbReference type="CDD" id="cd10434">
    <property type="entry name" value="GIY-YIG_UvrC_Cho"/>
    <property type="match status" value="1"/>
</dbReference>
<dbReference type="FunFam" id="3.40.1440.10:FF:000001">
    <property type="entry name" value="UvrABC system protein C"/>
    <property type="match status" value="1"/>
</dbReference>
<dbReference type="Gene3D" id="1.10.150.20">
    <property type="entry name" value="5' to 3' exonuclease, C-terminal subdomain"/>
    <property type="match status" value="1"/>
</dbReference>
<dbReference type="Gene3D" id="3.40.1440.10">
    <property type="entry name" value="GIY-YIG endonuclease"/>
    <property type="match status" value="1"/>
</dbReference>
<dbReference type="Gene3D" id="4.10.860.10">
    <property type="entry name" value="UVR domain"/>
    <property type="match status" value="1"/>
</dbReference>
<dbReference type="Gene3D" id="3.30.420.340">
    <property type="entry name" value="UvrC, RNAse H endonuclease domain"/>
    <property type="match status" value="1"/>
</dbReference>
<dbReference type="HAMAP" id="MF_00203">
    <property type="entry name" value="UvrC"/>
    <property type="match status" value="1"/>
</dbReference>
<dbReference type="InterPro" id="IPR000305">
    <property type="entry name" value="GIY-YIG_endonuc"/>
</dbReference>
<dbReference type="InterPro" id="IPR035901">
    <property type="entry name" value="GIY-YIG_endonuc_sf"/>
</dbReference>
<dbReference type="InterPro" id="IPR047296">
    <property type="entry name" value="GIY-YIG_UvrC_Cho"/>
</dbReference>
<dbReference type="InterPro" id="IPR003583">
    <property type="entry name" value="Hlx-hairpin-Hlx_DNA-bd_motif"/>
</dbReference>
<dbReference type="InterPro" id="IPR010994">
    <property type="entry name" value="RuvA_2-like"/>
</dbReference>
<dbReference type="InterPro" id="IPR001943">
    <property type="entry name" value="UVR_dom"/>
</dbReference>
<dbReference type="InterPro" id="IPR036876">
    <property type="entry name" value="UVR_dom_sf"/>
</dbReference>
<dbReference type="InterPro" id="IPR050066">
    <property type="entry name" value="UvrABC_protein_C"/>
</dbReference>
<dbReference type="InterPro" id="IPR004791">
    <property type="entry name" value="UvrC"/>
</dbReference>
<dbReference type="InterPro" id="IPR001162">
    <property type="entry name" value="UvrC_RNase_H_dom"/>
</dbReference>
<dbReference type="InterPro" id="IPR038476">
    <property type="entry name" value="UvrC_RNase_H_dom_sf"/>
</dbReference>
<dbReference type="NCBIfam" id="TIGR00194">
    <property type="entry name" value="uvrC"/>
    <property type="match status" value="1"/>
</dbReference>
<dbReference type="PANTHER" id="PTHR30562:SF1">
    <property type="entry name" value="UVRABC SYSTEM PROTEIN C"/>
    <property type="match status" value="1"/>
</dbReference>
<dbReference type="PANTHER" id="PTHR30562">
    <property type="entry name" value="UVRC/OXIDOREDUCTASE"/>
    <property type="match status" value="1"/>
</dbReference>
<dbReference type="Pfam" id="PF01541">
    <property type="entry name" value="GIY-YIG"/>
    <property type="match status" value="1"/>
</dbReference>
<dbReference type="Pfam" id="PF14520">
    <property type="entry name" value="HHH_5"/>
    <property type="match status" value="1"/>
</dbReference>
<dbReference type="Pfam" id="PF02151">
    <property type="entry name" value="UVR"/>
    <property type="match status" value="1"/>
</dbReference>
<dbReference type="Pfam" id="PF22920">
    <property type="entry name" value="UvrC_RNaseH"/>
    <property type="match status" value="1"/>
</dbReference>
<dbReference type="Pfam" id="PF08459">
    <property type="entry name" value="UvrC_RNaseH_dom"/>
    <property type="match status" value="1"/>
</dbReference>
<dbReference type="SMART" id="SM00465">
    <property type="entry name" value="GIYc"/>
    <property type="match status" value="1"/>
</dbReference>
<dbReference type="SMART" id="SM00278">
    <property type="entry name" value="HhH1"/>
    <property type="match status" value="2"/>
</dbReference>
<dbReference type="SUPFAM" id="SSF46600">
    <property type="entry name" value="C-terminal UvrC-binding domain of UvrB"/>
    <property type="match status" value="1"/>
</dbReference>
<dbReference type="SUPFAM" id="SSF82771">
    <property type="entry name" value="GIY-YIG endonuclease"/>
    <property type="match status" value="1"/>
</dbReference>
<dbReference type="SUPFAM" id="SSF47781">
    <property type="entry name" value="RuvA domain 2-like"/>
    <property type="match status" value="1"/>
</dbReference>
<dbReference type="PROSITE" id="PS50164">
    <property type="entry name" value="GIY_YIG"/>
    <property type="match status" value="1"/>
</dbReference>
<dbReference type="PROSITE" id="PS50151">
    <property type="entry name" value="UVR"/>
    <property type="match status" value="1"/>
</dbReference>
<dbReference type="PROSITE" id="PS50165">
    <property type="entry name" value="UVRC"/>
    <property type="match status" value="1"/>
</dbReference>
<gene>
    <name evidence="1" type="primary">uvrC</name>
    <name type="ordered locus">RP572</name>
</gene>
<accession>Q9ZCX9</accession>
<organism>
    <name type="scientific">Rickettsia prowazekii (strain Madrid E)</name>
    <dbReference type="NCBI Taxonomy" id="272947"/>
    <lineage>
        <taxon>Bacteria</taxon>
        <taxon>Pseudomonadati</taxon>
        <taxon>Pseudomonadota</taxon>
        <taxon>Alphaproteobacteria</taxon>
        <taxon>Rickettsiales</taxon>
        <taxon>Rickettsiaceae</taxon>
        <taxon>Rickettsieae</taxon>
        <taxon>Rickettsia</taxon>
        <taxon>typhus group</taxon>
    </lineage>
</organism>
<proteinExistence type="inferred from homology"/>